<protein>
    <recommendedName>
        <fullName>Probable ATP-dependent transporter ycf16</fullName>
    </recommendedName>
</protein>
<keyword id="KW-0067">ATP-binding</keyword>
<keyword id="KW-0150">Chloroplast</keyword>
<keyword id="KW-0547">Nucleotide-binding</keyword>
<keyword id="KW-0934">Plastid</keyword>
<keyword id="KW-0813">Transport</keyword>
<feature type="chain" id="PRO_0000093406" description="Probable ATP-dependent transporter ycf16">
    <location>
        <begin position="1"/>
        <end position="251"/>
    </location>
</feature>
<feature type="domain" description="ABC transporter" evidence="1">
    <location>
        <begin position="7"/>
        <end position="251"/>
    </location>
</feature>
<feature type="binding site" evidence="1">
    <location>
        <begin position="39"/>
        <end position="46"/>
    </location>
    <ligand>
        <name>ATP</name>
        <dbReference type="ChEBI" id="CHEBI:30616"/>
    </ligand>
</feature>
<organism>
    <name type="scientific">Antithamnion sp.</name>
    <name type="common">Red alga</name>
    <dbReference type="NCBI Taxonomy" id="2767"/>
    <lineage>
        <taxon>Eukaryota</taxon>
        <taxon>Rhodophyta</taxon>
        <taxon>Florideophyceae</taxon>
        <taxon>Rhodymeniophycidae</taxon>
        <taxon>Ceramiales</taxon>
        <taxon>Ceramiaceae</taxon>
        <taxon>Antithamnion</taxon>
    </lineage>
</organism>
<proteinExistence type="inferred from homology"/>
<gene>
    <name type="primary">ycf16</name>
</gene>
<accession>Q02856</accession>
<dbReference type="EMBL" id="X63382">
    <property type="protein sequence ID" value="CAA44985.1"/>
    <property type="molecule type" value="Genomic_DNA"/>
</dbReference>
<dbReference type="PIR" id="S37635">
    <property type="entry name" value="S37635"/>
</dbReference>
<dbReference type="SMR" id="Q02856"/>
<dbReference type="GO" id="GO:0009507">
    <property type="term" value="C:chloroplast"/>
    <property type="evidence" value="ECO:0007669"/>
    <property type="project" value="UniProtKB-SubCell"/>
</dbReference>
<dbReference type="GO" id="GO:0005524">
    <property type="term" value="F:ATP binding"/>
    <property type="evidence" value="ECO:0007669"/>
    <property type="project" value="UniProtKB-KW"/>
</dbReference>
<dbReference type="GO" id="GO:0016887">
    <property type="term" value="F:ATP hydrolysis activity"/>
    <property type="evidence" value="ECO:0007669"/>
    <property type="project" value="InterPro"/>
</dbReference>
<dbReference type="CDD" id="cd03217">
    <property type="entry name" value="ABC_FeS_Assembly"/>
    <property type="match status" value="1"/>
</dbReference>
<dbReference type="Gene3D" id="3.40.50.300">
    <property type="entry name" value="P-loop containing nucleotide triphosphate hydrolases"/>
    <property type="match status" value="1"/>
</dbReference>
<dbReference type="InterPro" id="IPR003593">
    <property type="entry name" value="AAA+_ATPase"/>
</dbReference>
<dbReference type="InterPro" id="IPR003439">
    <property type="entry name" value="ABC_transporter-like_ATP-bd"/>
</dbReference>
<dbReference type="InterPro" id="IPR017871">
    <property type="entry name" value="ABC_transporter-like_CS"/>
</dbReference>
<dbReference type="InterPro" id="IPR010230">
    <property type="entry name" value="FeS-cluster_ATPase_SufC"/>
</dbReference>
<dbReference type="InterPro" id="IPR027417">
    <property type="entry name" value="P-loop_NTPase"/>
</dbReference>
<dbReference type="NCBIfam" id="TIGR01978">
    <property type="entry name" value="sufC"/>
    <property type="match status" value="1"/>
</dbReference>
<dbReference type="PANTHER" id="PTHR43204">
    <property type="entry name" value="ABC TRANSPORTER I FAMILY MEMBER 6, CHLOROPLASTIC"/>
    <property type="match status" value="1"/>
</dbReference>
<dbReference type="PANTHER" id="PTHR43204:SF1">
    <property type="entry name" value="ABC TRANSPORTER I FAMILY MEMBER 6, CHLOROPLASTIC"/>
    <property type="match status" value="1"/>
</dbReference>
<dbReference type="Pfam" id="PF00005">
    <property type="entry name" value="ABC_tran"/>
    <property type="match status" value="1"/>
</dbReference>
<dbReference type="SMART" id="SM00382">
    <property type="entry name" value="AAA"/>
    <property type="match status" value="1"/>
</dbReference>
<dbReference type="SUPFAM" id="SSF52540">
    <property type="entry name" value="P-loop containing nucleoside triphosphate hydrolases"/>
    <property type="match status" value="1"/>
</dbReference>
<dbReference type="PROSITE" id="PS00211">
    <property type="entry name" value="ABC_TRANSPORTER_1"/>
    <property type="match status" value="1"/>
</dbReference>
<dbReference type="PROSITE" id="PS50893">
    <property type="entry name" value="ABC_TRANSPORTER_2"/>
    <property type="match status" value="1"/>
</dbReference>
<comment type="subcellular location">
    <subcellularLocation>
        <location>Plastid</location>
        <location>Chloroplast</location>
    </subcellularLocation>
</comment>
<comment type="similarity">
    <text evidence="2">Belongs to the ABC transporter superfamily. Ycf16 family.</text>
</comment>
<sequence>MNNRILLNIKNLDVTIGETQILNSLNLSIKPGEIHAIMGKNGSGKSTLAKVIAGHPSYKITNGQILFENQDVTEIEPEDRSHLGIFLAFQYPVEIPGVTNADFLRIAYNAKRAFDNKEELDPLSFFSFIENKISNIDLNSTFLSRNVNEGFSGGEKKKNEILQMSLLNSKLAILDETDSGLDIDALKTIAKQINSLKTQENSIILITHYQRLLDYIKPDYIHVMQKGEIIYTGGSDTAMKLEKYGYDYLNK</sequence>
<evidence type="ECO:0000255" key="1">
    <source>
        <dbReference type="PROSITE-ProRule" id="PRU00434"/>
    </source>
</evidence>
<evidence type="ECO:0000305" key="2"/>
<reference key="1">
    <citation type="journal article" date="1992" name="J. Mol. Biol.">
        <title>Large ATP synthase operon of the red alga Antithamnion sp. resembles the corresponding operon in cyanobacteria.</title>
        <authorList>
            <person name="Kostrzewa M."/>
            <person name="Zetsche K."/>
        </authorList>
    </citation>
    <scope>NUCLEOTIDE SEQUENCE [GENOMIC DNA]</scope>
    <source>
        <strain>LB 95.79</strain>
    </source>
</reference>
<geneLocation type="chloroplast"/>
<name>ABCX_ANTSP</name>